<sequence length="1020" mass="112250">MGRGAGREYSPAATTAENGGGKKKQKEKELDELKKEVAMDDHKLSLDELGRKYQVDLSKGLTNQRAQDVLARDGPNALTPPPTTPEWVKFCRQLFGGFSILLWIGAILCFLAYGIQAAMEDEPSNDNLYLGVVLAAVVIVTGCFSYYQEAKSSKIMDSFKNMVPQQALVIREGEKMQINAEEVVVGDLVEVKGGDRVPADLRIISSHGCKVDNSSLTGESEPQTRSPEFTHENPLETRNICFFSTNCVEGTARGIVIATGDRTVMGRIATLASGLEVGRTPIAMEIEHFIQLITGVAVFPGVSFFVLSLILGYSWLEAVIFLIGIIVANVPEGLLATVTVCLTLTAKRMARKNCLVKNLEAVETLGSTSTICSDKTGTLTQNRMTVAHMWFDNQIREADTTEDQSGATFDKRSPTWTALSRIAGLCNRAVFKAGQENISVSKRDTAGDASESALLKCIELSCGSVRKMRDRNPKVAEIPFNSTNKYQLSIHEREDSPQSHVLVMKGAPERILDRCPTILVQGKEIPLDKEMQDAFQNAYMELGGLGERVLGFCQLNLPSGKFPRGFKFDTDELNFPTEKLCFVGLMSMIDPPRAAVPDAVGKCRSAGIKVIMVTGDHPITAKAIAKGVGIISEGNETVEDIAARLNIPMSQVNPREAKACVVHGSDLKDMTSEQLDEILKNHTEIVFARTSPQQKLVIVEGCQRQGAIVAVTGDGVNDSPALKKADIGIAMGISGSDVSKQAADMILLDDNFASIVTGVEEGRLVFDNLKKSIAYTLTSNIPEITPFLLFIIANIPLPLGTVTILCIDLGTDMVPAISLAYEAAESDIMKRQPRNSQTDKLVNERLISMAYGQIGMIQALGGFFTYFVILAENGFLPSRLLGIRLDWDDRTMNDLEDSYGQEWTYEQRKVVEFTCHTAFFASIVVVQWADLIICKTRRNSVFQQGMKNKILIFGLLEETALAAFLSYCPGMGVALRMYPLKVTWWFCAFPYSLLIFIYDEVRKLILRRYPGGWVEKETYY</sequence>
<feature type="propeptide" id="PRO_0000305983" evidence="1">
    <location>
        <begin position="1"/>
        <end position="5"/>
    </location>
</feature>
<feature type="chain" id="PRO_0000305984" description="Sodium/potassium-transporting ATPase subunit alpha-2" evidence="1">
    <location>
        <begin position="6"/>
        <end position="1020"/>
    </location>
</feature>
<feature type="topological domain" description="Cytoplasmic" evidence="7">
    <location>
        <begin position="6"/>
        <end position="85"/>
    </location>
</feature>
<feature type="transmembrane region" description="Helical" evidence="7">
    <location>
        <begin position="86"/>
        <end position="106"/>
    </location>
</feature>
<feature type="topological domain" description="Extracellular" evidence="7">
    <location>
        <begin position="107"/>
        <end position="129"/>
    </location>
</feature>
<feature type="transmembrane region" description="Helical" evidence="7">
    <location>
        <begin position="130"/>
        <end position="150"/>
    </location>
</feature>
<feature type="topological domain" description="Cytoplasmic" evidence="7">
    <location>
        <begin position="151"/>
        <end position="286"/>
    </location>
</feature>
<feature type="transmembrane region" description="Helical" evidence="7">
    <location>
        <begin position="287"/>
        <end position="306"/>
    </location>
</feature>
<feature type="topological domain" description="Extracellular" evidence="7">
    <location>
        <begin position="307"/>
        <end position="318"/>
    </location>
</feature>
<feature type="transmembrane region" description="Helical" evidence="7">
    <location>
        <begin position="319"/>
        <end position="336"/>
    </location>
</feature>
<feature type="topological domain" description="Cytoplasmic" evidence="7">
    <location>
        <begin position="337"/>
        <end position="769"/>
    </location>
</feature>
<feature type="transmembrane region" description="Helical" evidence="7">
    <location>
        <begin position="770"/>
        <end position="789"/>
    </location>
</feature>
<feature type="topological domain" description="Extracellular" evidence="7">
    <location>
        <begin position="790"/>
        <end position="799"/>
    </location>
</feature>
<feature type="transmembrane region" description="Helical" evidence="7">
    <location>
        <begin position="800"/>
        <end position="820"/>
    </location>
</feature>
<feature type="topological domain" description="Cytoplasmic" evidence="7">
    <location>
        <begin position="821"/>
        <end position="840"/>
    </location>
</feature>
<feature type="transmembrane region" description="Helical" evidence="7">
    <location>
        <begin position="841"/>
        <end position="863"/>
    </location>
</feature>
<feature type="topological domain" description="Extracellular" evidence="7">
    <location>
        <begin position="864"/>
        <end position="915"/>
    </location>
</feature>
<feature type="transmembrane region" description="Helical" evidence="7">
    <location>
        <begin position="916"/>
        <end position="935"/>
    </location>
</feature>
<feature type="topological domain" description="Cytoplasmic" evidence="7">
    <location>
        <begin position="936"/>
        <end position="948"/>
    </location>
</feature>
<feature type="transmembrane region" description="Helical" evidence="7">
    <location>
        <begin position="949"/>
        <end position="967"/>
    </location>
</feature>
<feature type="topological domain" description="Extracellular" evidence="7">
    <location>
        <begin position="968"/>
        <end position="982"/>
    </location>
</feature>
<feature type="transmembrane region" description="Helical" evidence="7">
    <location>
        <begin position="983"/>
        <end position="1003"/>
    </location>
</feature>
<feature type="topological domain" description="Cytoplasmic" evidence="7">
    <location>
        <begin position="1004"/>
        <end position="1020"/>
    </location>
</feature>
<feature type="region of interest" description="Disordered" evidence="8">
    <location>
        <begin position="1"/>
        <end position="31"/>
    </location>
</feature>
<feature type="region of interest" description="Interaction with phosphoinositide-3 kinase" evidence="1">
    <location>
        <begin position="80"/>
        <end position="82"/>
    </location>
</feature>
<feature type="region of interest" description="Disordered" evidence="8">
    <location>
        <begin position="212"/>
        <end position="231"/>
    </location>
</feature>
<feature type="compositionally biased region" description="Polar residues" evidence="8">
    <location>
        <begin position="212"/>
        <end position="227"/>
    </location>
</feature>
<feature type="active site" description="4-aspartylphosphate intermediate" evidence="1">
    <location>
        <position position="374"/>
    </location>
</feature>
<feature type="binding site" evidence="1">
    <location>
        <position position="714"/>
    </location>
    <ligand>
        <name>Mg(2+)</name>
        <dbReference type="ChEBI" id="CHEBI:18420"/>
    </ligand>
</feature>
<feature type="binding site" evidence="1">
    <location>
        <position position="718"/>
    </location>
    <ligand>
        <name>Mg(2+)</name>
        <dbReference type="ChEBI" id="CHEBI:18420"/>
    </ligand>
</feature>
<feature type="modified residue" description="Phosphoserine" evidence="6">
    <location>
        <position position="10"/>
    </location>
</feature>
<feature type="modified residue" description="Phosphoserine" evidence="3">
    <location>
        <position position="439"/>
    </location>
</feature>
<feature type="modified residue" description="Phosphoserine" evidence="6">
    <location>
        <position position="450"/>
    </location>
</feature>
<feature type="modified residue" description="Phosphoserine" evidence="3">
    <location>
        <position position="496"/>
    </location>
</feature>
<feature type="modified residue" description="Phosphoserine" evidence="6">
    <location>
        <position position="559"/>
    </location>
</feature>
<feature type="modified residue" description="Phosphothreonine" evidence="5">
    <location>
        <position position="570"/>
    </location>
</feature>
<feature type="modified residue" description="Phosphoserine" evidence="5">
    <location>
        <position position="587"/>
    </location>
</feature>
<feature type="modified residue" description="Phosphoserine" evidence="6">
    <location>
        <position position="672"/>
    </location>
</feature>
<feature type="modified residue" description="Phosphoserine" evidence="4">
    <location>
        <position position="826"/>
    </location>
</feature>
<feature type="modified residue" description="Phosphoserine; by PKA" evidence="1">
    <location>
        <position position="940"/>
    </location>
</feature>
<proteinExistence type="evidence at transcript level"/>
<evidence type="ECO:0000250" key="1"/>
<evidence type="ECO:0000250" key="2">
    <source>
        <dbReference type="UniProtKB" id="A2VDL6"/>
    </source>
</evidence>
<evidence type="ECO:0000250" key="3">
    <source>
        <dbReference type="UniProtKB" id="P06686"/>
    </source>
</evidence>
<evidence type="ECO:0000250" key="4">
    <source>
        <dbReference type="UniProtKB" id="P09626"/>
    </source>
</evidence>
<evidence type="ECO:0000250" key="5">
    <source>
        <dbReference type="UniProtKB" id="P50993"/>
    </source>
</evidence>
<evidence type="ECO:0000250" key="6">
    <source>
        <dbReference type="UniProtKB" id="Q6PIE5"/>
    </source>
</evidence>
<evidence type="ECO:0000255" key="7"/>
<evidence type="ECO:0000256" key="8">
    <source>
        <dbReference type="SAM" id="MobiDB-lite"/>
    </source>
</evidence>
<evidence type="ECO:0000305" key="9"/>
<name>AT1A2_PONAB</name>
<gene>
    <name type="primary">ATP1A2</name>
</gene>
<accession>Q5RCD8</accession>
<comment type="function">
    <text evidence="1">This is the catalytic component of the active enzyme, which catalyzes the hydrolysis of ATP coupled with the exchange of sodium and potassium ions across the plasma membrane. This action creates the electrochemical gradient of sodium and potassium, providing the energy for active transport of various nutrients (By similarity).</text>
</comment>
<comment type="catalytic activity">
    <reaction>
        <text>K(+)(out) + Na(+)(in) + ATP + H2O = K(+)(in) + Na(+)(out) + ADP + phosphate + H(+)</text>
        <dbReference type="Rhea" id="RHEA:18353"/>
        <dbReference type="ChEBI" id="CHEBI:15377"/>
        <dbReference type="ChEBI" id="CHEBI:15378"/>
        <dbReference type="ChEBI" id="CHEBI:29101"/>
        <dbReference type="ChEBI" id="CHEBI:29103"/>
        <dbReference type="ChEBI" id="CHEBI:30616"/>
        <dbReference type="ChEBI" id="CHEBI:43474"/>
        <dbReference type="ChEBI" id="CHEBI:456216"/>
        <dbReference type="EC" id="7.2.2.13"/>
    </reaction>
</comment>
<comment type="subunit">
    <text evidence="2">The sodium/potassium-transporting ATPase is composed of a catalytic alpha subunit, an auxiliary non-catalytic beta subunit and an additional regulatory subunit. Interacts with regulatory subunit FXYD1.</text>
</comment>
<comment type="subcellular location">
    <subcellularLocation>
        <location evidence="1">Membrane</location>
        <topology evidence="1">Multi-pass membrane protein</topology>
    </subcellularLocation>
    <subcellularLocation>
        <location evidence="1">Cell membrane</location>
        <topology evidence="1">Multi-pass membrane protein</topology>
    </subcellularLocation>
</comment>
<comment type="similarity">
    <text evidence="9">Belongs to the cation transport ATPase (P-type) (TC 3.A.3) family. Type IIC subfamily.</text>
</comment>
<keyword id="KW-0067">ATP-binding</keyword>
<keyword id="KW-1003">Cell membrane</keyword>
<keyword id="KW-0406">Ion transport</keyword>
<keyword id="KW-0460">Magnesium</keyword>
<keyword id="KW-0472">Membrane</keyword>
<keyword id="KW-0479">Metal-binding</keyword>
<keyword id="KW-0547">Nucleotide-binding</keyword>
<keyword id="KW-0597">Phosphoprotein</keyword>
<keyword id="KW-0630">Potassium</keyword>
<keyword id="KW-0633">Potassium transport</keyword>
<keyword id="KW-1185">Reference proteome</keyword>
<keyword id="KW-0915">Sodium</keyword>
<keyword id="KW-0739">Sodium transport</keyword>
<keyword id="KW-0740">Sodium/potassium transport</keyword>
<keyword id="KW-1278">Translocase</keyword>
<keyword id="KW-0812">Transmembrane</keyword>
<keyword id="KW-1133">Transmembrane helix</keyword>
<keyword id="KW-0813">Transport</keyword>
<organism>
    <name type="scientific">Pongo abelii</name>
    <name type="common">Sumatran orangutan</name>
    <name type="synonym">Pongo pygmaeus abelii</name>
    <dbReference type="NCBI Taxonomy" id="9601"/>
    <lineage>
        <taxon>Eukaryota</taxon>
        <taxon>Metazoa</taxon>
        <taxon>Chordata</taxon>
        <taxon>Craniata</taxon>
        <taxon>Vertebrata</taxon>
        <taxon>Euteleostomi</taxon>
        <taxon>Mammalia</taxon>
        <taxon>Eutheria</taxon>
        <taxon>Euarchontoglires</taxon>
        <taxon>Primates</taxon>
        <taxon>Haplorrhini</taxon>
        <taxon>Catarrhini</taxon>
        <taxon>Hominidae</taxon>
        <taxon>Pongo</taxon>
    </lineage>
</organism>
<reference key="1">
    <citation type="submission" date="2004-11" db="EMBL/GenBank/DDBJ databases">
        <authorList>
            <consortium name="The German cDNA consortium"/>
        </authorList>
    </citation>
    <scope>NUCLEOTIDE SEQUENCE [LARGE SCALE MRNA]</scope>
    <source>
        <tissue>Brain cortex</tissue>
    </source>
</reference>
<protein>
    <recommendedName>
        <fullName>Sodium/potassium-transporting ATPase subunit alpha-2</fullName>
        <shortName>Na(+)/K(+) ATPase alpha-2 subunit</shortName>
        <ecNumber>7.2.2.13</ecNumber>
    </recommendedName>
    <alternativeName>
        <fullName>Sodium pump subunit alpha-2</fullName>
    </alternativeName>
</protein>
<dbReference type="EC" id="7.2.2.13"/>
<dbReference type="EMBL" id="CR858333">
    <property type="protein sequence ID" value="CAH90569.1"/>
    <property type="molecule type" value="mRNA"/>
</dbReference>
<dbReference type="RefSeq" id="NP_001125304.1">
    <property type="nucleotide sequence ID" value="NM_001131832.1"/>
</dbReference>
<dbReference type="SMR" id="Q5RCD8"/>
<dbReference type="STRING" id="9601.ENSPPYP00000000749"/>
<dbReference type="GeneID" id="100172203"/>
<dbReference type="KEGG" id="pon:100172203"/>
<dbReference type="CTD" id="477"/>
<dbReference type="eggNOG" id="KOG0203">
    <property type="taxonomic scope" value="Eukaryota"/>
</dbReference>
<dbReference type="InParanoid" id="Q5RCD8"/>
<dbReference type="OrthoDB" id="3352408at2759"/>
<dbReference type="Proteomes" id="UP000001595">
    <property type="component" value="Unplaced"/>
</dbReference>
<dbReference type="GO" id="GO:0042995">
    <property type="term" value="C:cell projection"/>
    <property type="evidence" value="ECO:0007669"/>
    <property type="project" value="TreeGrafter"/>
</dbReference>
<dbReference type="GO" id="GO:0005737">
    <property type="term" value="C:cytoplasm"/>
    <property type="evidence" value="ECO:0000250"/>
    <property type="project" value="UniProtKB"/>
</dbReference>
<dbReference type="GO" id="GO:0005886">
    <property type="term" value="C:plasma membrane"/>
    <property type="evidence" value="ECO:0000250"/>
    <property type="project" value="UniProtKB"/>
</dbReference>
<dbReference type="GO" id="GO:0005890">
    <property type="term" value="C:sodium:potassium-exchanging ATPase complex"/>
    <property type="evidence" value="ECO:0007669"/>
    <property type="project" value="TreeGrafter"/>
</dbReference>
<dbReference type="GO" id="GO:0005524">
    <property type="term" value="F:ATP binding"/>
    <property type="evidence" value="ECO:0007669"/>
    <property type="project" value="UniProtKB-KW"/>
</dbReference>
<dbReference type="GO" id="GO:0016887">
    <property type="term" value="F:ATP hydrolysis activity"/>
    <property type="evidence" value="ECO:0007669"/>
    <property type="project" value="InterPro"/>
</dbReference>
<dbReference type="GO" id="GO:0046872">
    <property type="term" value="F:metal ion binding"/>
    <property type="evidence" value="ECO:0007669"/>
    <property type="project" value="UniProtKB-KW"/>
</dbReference>
<dbReference type="GO" id="GO:0005391">
    <property type="term" value="F:P-type sodium:potassium-exchanging transporter activity"/>
    <property type="evidence" value="ECO:0000250"/>
    <property type="project" value="UniProtKB"/>
</dbReference>
<dbReference type="GO" id="GO:0030007">
    <property type="term" value="P:intracellular potassium ion homeostasis"/>
    <property type="evidence" value="ECO:0007669"/>
    <property type="project" value="TreeGrafter"/>
</dbReference>
<dbReference type="GO" id="GO:0006883">
    <property type="term" value="P:intracellular sodium ion homeostasis"/>
    <property type="evidence" value="ECO:0007669"/>
    <property type="project" value="TreeGrafter"/>
</dbReference>
<dbReference type="GO" id="GO:1990573">
    <property type="term" value="P:potassium ion import across plasma membrane"/>
    <property type="evidence" value="ECO:0007669"/>
    <property type="project" value="TreeGrafter"/>
</dbReference>
<dbReference type="GO" id="GO:1902600">
    <property type="term" value="P:proton transmembrane transport"/>
    <property type="evidence" value="ECO:0007669"/>
    <property type="project" value="TreeGrafter"/>
</dbReference>
<dbReference type="GO" id="GO:0036376">
    <property type="term" value="P:sodium ion export across plasma membrane"/>
    <property type="evidence" value="ECO:0007669"/>
    <property type="project" value="TreeGrafter"/>
</dbReference>
<dbReference type="CDD" id="cd02608">
    <property type="entry name" value="P-type_ATPase_Na-K_like"/>
    <property type="match status" value="1"/>
</dbReference>
<dbReference type="FunFam" id="2.70.150.10:FF:000142">
    <property type="entry name" value="Na/K ATPase alpha 2 subunit"/>
    <property type="match status" value="1"/>
</dbReference>
<dbReference type="FunFam" id="2.70.150.10:FF:000106">
    <property type="entry name" value="Sodium/potassium-transporting ATPase subunit alpha"/>
    <property type="match status" value="1"/>
</dbReference>
<dbReference type="FunFam" id="3.40.1110.10:FF:000001">
    <property type="entry name" value="Sodium/potassium-transporting ATPase subunit alpha"/>
    <property type="match status" value="1"/>
</dbReference>
<dbReference type="FunFam" id="3.40.50.1000:FF:000004">
    <property type="entry name" value="Sodium/potassium-transporting ATPase subunit alpha"/>
    <property type="match status" value="1"/>
</dbReference>
<dbReference type="FunFam" id="1.20.1110.10:FF:000095">
    <property type="entry name" value="Sodium/potassium-transporting ATPase subunit alpha-1"/>
    <property type="match status" value="2"/>
</dbReference>
<dbReference type="Gene3D" id="3.40.1110.10">
    <property type="entry name" value="Calcium-transporting ATPase, cytoplasmic domain N"/>
    <property type="match status" value="1"/>
</dbReference>
<dbReference type="Gene3D" id="2.70.150.10">
    <property type="entry name" value="Calcium-transporting ATPase, cytoplasmic transduction domain A"/>
    <property type="match status" value="1"/>
</dbReference>
<dbReference type="Gene3D" id="1.20.1110.10">
    <property type="entry name" value="Calcium-transporting ATPase, transmembrane domain"/>
    <property type="match status" value="1"/>
</dbReference>
<dbReference type="Gene3D" id="3.40.50.1000">
    <property type="entry name" value="HAD superfamily/HAD-like"/>
    <property type="match status" value="1"/>
</dbReference>
<dbReference type="InterPro" id="IPR006068">
    <property type="entry name" value="ATPase_P-typ_cation-transptr_C"/>
</dbReference>
<dbReference type="InterPro" id="IPR004014">
    <property type="entry name" value="ATPase_P-typ_cation-transptr_N"/>
</dbReference>
<dbReference type="InterPro" id="IPR023299">
    <property type="entry name" value="ATPase_P-typ_cyto_dom_N"/>
</dbReference>
<dbReference type="InterPro" id="IPR018303">
    <property type="entry name" value="ATPase_P-typ_P_site"/>
</dbReference>
<dbReference type="InterPro" id="IPR023298">
    <property type="entry name" value="ATPase_P-typ_TM_dom_sf"/>
</dbReference>
<dbReference type="InterPro" id="IPR008250">
    <property type="entry name" value="ATPase_P-typ_transduc_dom_A_sf"/>
</dbReference>
<dbReference type="InterPro" id="IPR050510">
    <property type="entry name" value="Cation_transp_ATPase_P-type"/>
</dbReference>
<dbReference type="InterPro" id="IPR036412">
    <property type="entry name" value="HAD-like_sf"/>
</dbReference>
<dbReference type="InterPro" id="IPR023214">
    <property type="entry name" value="HAD_sf"/>
</dbReference>
<dbReference type="InterPro" id="IPR005775">
    <property type="entry name" value="P-type_ATPase_IIC"/>
</dbReference>
<dbReference type="InterPro" id="IPR001757">
    <property type="entry name" value="P_typ_ATPase"/>
</dbReference>
<dbReference type="InterPro" id="IPR044492">
    <property type="entry name" value="P_typ_ATPase_HD_dom"/>
</dbReference>
<dbReference type="NCBIfam" id="TIGR01106">
    <property type="entry name" value="ATPase-IIC_X-K"/>
    <property type="match status" value="1"/>
</dbReference>
<dbReference type="NCBIfam" id="TIGR01494">
    <property type="entry name" value="ATPase_P-type"/>
    <property type="match status" value="2"/>
</dbReference>
<dbReference type="PANTHER" id="PTHR43294">
    <property type="entry name" value="SODIUM/POTASSIUM-TRANSPORTING ATPASE SUBUNIT ALPHA"/>
    <property type="match status" value="1"/>
</dbReference>
<dbReference type="PANTHER" id="PTHR43294:SF6">
    <property type="entry name" value="SODIUM_POTASSIUM-TRANSPORTING ATPASE SUBUNIT ALPHA-2"/>
    <property type="match status" value="1"/>
</dbReference>
<dbReference type="Pfam" id="PF13246">
    <property type="entry name" value="Cation_ATPase"/>
    <property type="match status" value="1"/>
</dbReference>
<dbReference type="Pfam" id="PF00689">
    <property type="entry name" value="Cation_ATPase_C"/>
    <property type="match status" value="1"/>
</dbReference>
<dbReference type="Pfam" id="PF00690">
    <property type="entry name" value="Cation_ATPase_N"/>
    <property type="match status" value="1"/>
</dbReference>
<dbReference type="Pfam" id="PF00122">
    <property type="entry name" value="E1-E2_ATPase"/>
    <property type="match status" value="1"/>
</dbReference>
<dbReference type="Pfam" id="PF00702">
    <property type="entry name" value="Hydrolase"/>
    <property type="match status" value="1"/>
</dbReference>
<dbReference type="PRINTS" id="PR00119">
    <property type="entry name" value="CATATPASE"/>
</dbReference>
<dbReference type="PRINTS" id="PR00121">
    <property type="entry name" value="NAKATPASE"/>
</dbReference>
<dbReference type="SFLD" id="SFLDS00003">
    <property type="entry name" value="Haloacid_Dehalogenase"/>
    <property type="match status" value="1"/>
</dbReference>
<dbReference type="SFLD" id="SFLDF00027">
    <property type="entry name" value="p-type_atpase"/>
    <property type="match status" value="1"/>
</dbReference>
<dbReference type="SMART" id="SM00831">
    <property type="entry name" value="Cation_ATPase_N"/>
    <property type="match status" value="1"/>
</dbReference>
<dbReference type="SUPFAM" id="SSF81653">
    <property type="entry name" value="Calcium ATPase, transduction domain A"/>
    <property type="match status" value="1"/>
</dbReference>
<dbReference type="SUPFAM" id="SSF81665">
    <property type="entry name" value="Calcium ATPase, transmembrane domain M"/>
    <property type="match status" value="1"/>
</dbReference>
<dbReference type="SUPFAM" id="SSF56784">
    <property type="entry name" value="HAD-like"/>
    <property type="match status" value="1"/>
</dbReference>
<dbReference type="SUPFAM" id="SSF81660">
    <property type="entry name" value="Metal cation-transporting ATPase, ATP-binding domain N"/>
    <property type="match status" value="1"/>
</dbReference>
<dbReference type="PROSITE" id="PS00154">
    <property type="entry name" value="ATPASE_E1_E2"/>
    <property type="match status" value="1"/>
</dbReference>